<feature type="chain" id="PRO_0000074432" description="Na(+)-translocating NADH-quinone reductase subunit B">
    <location>
        <begin position="1"/>
        <end position="503"/>
    </location>
</feature>
<feature type="transmembrane region" description="Helical" evidence="1">
    <location>
        <begin position="55"/>
        <end position="75"/>
    </location>
</feature>
<feature type="transmembrane region" description="Helical" evidence="1">
    <location>
        <begin position="94"/>
        <end position="114"/>
    </location>
</feature>
<feature type="transmembrane region" description="Helical" evidence="1">
    <location>
        <begin position="120"/>
        <end position="140"/>
    </location>
</feature>
<feature type="transmembrane region" description="Helical" evidence="1">
    <location>
        <begin position="161"/>
        <end position="181"/>
    </location>
</feature>
<feature type="transmembrane region" description="Helical" evidence="1">
    <location>
        <begin position="186"/>
        <end position="206"/>
    </location>
</feature>
<feature type="transmembrane region" description="Helical" evidence="1">
    <location>
        <begin position="361"/>
        <end position="381"/>
    </location>
</feature>
<feature type="transmembrane region" description="Helical" evidence="1">
    <location>
        <begin position="387"/>
        <end position="407"/>
    </location>
</feature>
<feature type="transmembrane region" description="Helical" evidence="1">
    <location>
        <begin position="417"/>
        <end position="437"/>
    </location>
</feature>
<feature type="transmembrane region" description="Helical" evidence="1">
    <location>
        <begin position="452"/>
        <end position="472"/>
    </location>
</feature>
<feature type="transmembrane region" description="Helical" evidence="1">
    <location>
        <begin position="475"/>
        <end position="495"/>
    </location>
</feature>
<feature type="modified residue" description="FMN phosphoryl threonine" evidence="1">
    <location>
        <position position="248"/>
    </location>
</feature>
<comment type="function">
    <text evidence="1">NQR complex catalyzes the reduction of ubiquinone-1 to ubiquinol by two successive reactions, coupled with the transport of Na(+) ions from the cytoplasm to the periplasm. NqrA to NqrE are probably involved in the second step, the conversion of ubisemiquinone to ubiquinol.</text>
</comment>
<comment type="catalytic activity">
    <reaction evidence="1">
        <text>a ubiquinone + n Na(+)(in) + NADH + H(+) = a ubiquinol + n Na(+)(out) + NAD(+)</text>
        <dbReference type="Rhea" id="RHEA:47748"/>
        <dbReference type="Rhea" id="RHEA-COMP:9565"/>
        <dbReference type="Rhea" id="RHEA-COMP:9566"/>
        <dbReference type="ChEBI" id="CHEBI:15378"/>
        <dbReference type="ChEBI" id="CHEBI:16389"/>
        <dbReference type="ChEBI" id="CHEBI:17976"/>
        <dbReference type="ChEBI" id="CHEBI:29101"/>
        <dbReference type="ChEBI" id="CHEBI:57540"/>
        <dbReference type="ChEBI" id="CHEBI:57945"/>
        <dbReference type="EC" id="7.2.1.1"/>
    </reaction>
</comment>
<comment type="cofactor">
    <cofactor evidence="1">
        <name>FMN</name>
        <dbReference type="ChEBI" id="CHEBI:58210"/>
    </cofactor>
</comment>
<comment type="subunit">
    <text evidence="1">Composed of six subunits; NqrA, NqrB, NqrC, NqrD, NqrE and NqrF.</text>
</comment>
<comment type="subcellular location">
    <subcellularLocation>
        <location evidence="1">Cell inner membrane</location>
        <topology evidence="1">Multi-pass membrane protein</topology>
    </subcellularLocation>
</comment>
<comment type="similarity">
    <text evidence="1">Belongs to the NqrB/RnfD family.</text>
</comment>
<keyword id="KW-0997">Cell inner membrane</keyword>
<keyword id="KW-1003">Cell membrane</keyword>
<keyword id="KW-0285">Flavoprotein</keyword>
<keyword id="KW-0288">FMN</keyword>
<keyword id="KW-0406">Ion transport</keyword>
<keyword id="KW-0472">Membrane</keyword>
<keyword id="KW-0520">NAD</keyword>
<keyword id="KW-0597">Phosphoprotein</keyword>
<keyword id="KW-0915">Sodium</keyword>
<keyword id="KW-0739">Sodium transport</keyword>
<keyword id="KW-1278">Translocase</keyword>
<keyword id="KW-0812">Transmembrane</keyword>
<keyword id="KW-1133">Transmembrane helix</keyword>
<keyword id="KW-0813">Transport</keyword>
<keyword id="KW-0830">Ubiquinone</keyword>
<name>NQRB_CHLCV</name>
<accession>Q823P2</accession>
<gene>
    <name evidence="1" type="primary">nqrB</name>
    <name type="ordered locus">CCA_00365</name>
</gene>
<sequence length="503" mass="55319">MLKRFVNSIWEICQKDKFQRFTPVADAIDTFCYEPIHQPSSPPFIRDAVDVKRWMMLVVIALFPATFLAIWNSGVQALVYGSGNAQLMESFLHISGFRSYLSFIFNDIGVFSILWTGCKIFLPLLIISYSVGGVCEVLFAIVRKHKIAEGLLVTGILYPLTLPPTIPYWMAALGIAFGVVVSKELFGGTGMNILNPALSGRAFLFFTFPAKMSGDVWVGSNPTKIKESLLAMNSTAGKSIIDGFSQSTCLQTLNSTAPAVKRVHVDAIASNILQMPHVPTESVIHSQFSIWAESHPGLMLDKLTLEQLQNFVTSPLSEGGLGLLPTQFDSAYSITDVIYGIGKFSSGNLFWGNIIGSLGETSTFACLLGAIFLVVTGIASWRTMVSFGIGAFITAWLFKIFSILIVGKHGAWAPARFFIPAYRQLFLGGLGFGLVFMATDPVSSPTMKLAKWIYGLFIGFMTIVIRLINPAYPEGVMLAILLGNVFAPLLDYFAVRKYRRRRI</sequence>
<evidence type="ECO:0000255" key="1">
    <source>
        <dbReference type="HAMAP-Rule" id="MF_00426"/>
    </source>
</evidence>
<dbReference type="EC" id="7.2.1.1" evidence="1"/>
<dbReference type="EMBL" id="AE015925">
    <property type="protein sequence ID" value="AAP05113.1"/>
    <property type="molecule type" value="Genomic_DNA"/>
</dbReference>
<dbReference type="RefSeq" id="WP_011006330.1">
    <property type="nucleotide sequence ID" value="NC_003361.3"/>
</dbReference>
<dbReference type="SMR" id="Q823P2"/>
<dbReference type="STRING" id="227941.CCA_00365"/>
<dbReference type="KEGG" id="cca:CCA_00365"/>
<dbReference type="eggNOG" id="COG1805">
    <property type="taxonomic scope" value="Bacteria"/>
</dbReference>
<dbReference type="HOGENOM" id="CLU_042020_1_1_0"/>
<dbReference type="OrthoDB" id="9776359at2"/>
<dbReference type="Proteomes" id="UP000002193">
    <property type="component" value="Chromosome"/>
</dbReference>
<dbReference type="GO" id="GO:0005886">
    <property type="term" value="C:plasma membrane"/>
    <property type="evidence" value="ECO:0007669"/>
    <property type="project" value="UniProtKB-SubCell"/>
</dbReference>
<dbReference type="GO" id="GO:0010181">
    <property type="term" value="F:FMN binding"/>
    <property type="evidence" value="ECO:0007669"/>
    <property type="project" value="InterPro"/>
</dbReference>
<dbReference type="GO" id="GO:0016655">
    <property type="term" value="F:oxidoreductase activity, acting on NAD(P)H, quinone or similar compound as acceptor"/>
    <property type="evidence" value="ECO:0007669"/>
    <property type="project" value="UniProtKB-UniRule"/>
</dbReference>
<dbReference type="GO" id="GO:0022904">
    <property type="term" value="P:respiratory electron transport chain"/>
    <property type="evidence" value="ECO:0007669"/>
    <property type="project" value="InterPro"/>
</dbReference>
<dbReference type="GO" id="GO:0006814">
    <property type="term" value="P:sodium ion transport"/>
    <property type="evidence" value="ECO:0007669"/>
    <property type="project" value="UniProtKB-UniRule"/>
</dbReference>
<dbReference type="GO" id="GO:0055085">
    <property type="term" value="P:transmembrane transport"/>
    <property type="evidence" value="ECO:0007669"/>
    <property type="project" value="InterPro"/>
</dbReference>
<dbReference type="HAMAP" id="MF_00426">
    <property type="entry name" value="NqrB"/>
    <property type="match status" value="1"/>
</dbReference>
<dbReference type="InterPro" id="IPR010966">
    <property type="entry name" value="NqrB"/>
</dbReference>
<dbReference type="InterPro" id="IPR004338">
    <property type="entry name" value="NqrB/RnfD"/>
</dbReference>
<dbReference type="NCBIfam" id="TIGR01937">
    <property type="entry name" value="nqrB"/>
    <property type="match status" value="1"/>
</dbReference>
<dbReference type="NCBIfam" id="NF002181">
    <property type="entry name" value="PRK01024.1"/>
    <property type="match status" value="1"/>
</dbReference>
<dbReference type="PANTHER" id="PTHR30578">
    <property type="entry name" value="ELECTRON TRANSPORT COMPLEX PROTEIN RNFD"/>
    <property type="match status" value="1"/>
</dbReference>
<dbReference type="PANTHER" id="PTHR30578:SF1">
    <property type="entry name" value="NA(+)-TRANSLOCATING NADH-QUINONE REDUCTASE SUBUNIT B"/>
    <property type="match status" value="1"/>
</dbReference>
<dbReference type="Pfam" id="PF03116">
    <property type="entry name" value="NQR2_RnfD_RnfE"/>
    <property type="match status" value="1"/>
</dbReference>
<proteinExistence type="inferred from homology"/>
<organism>
    <name type="scientific">Chlamydia caviae (strain ATCC VR-813 / DSM 19441 / 03DC25 / GPIC)</name>
    <name type="common">Chlamydophila caviae</name>
    <dbReference type="NCBI Taxonomy" id="227941"/>
    <lineage>
        <taxon>Bacteria</taxon>
        <taxon>Pseudomonadati</taxon>
        <taxon>Chlamydiota</taxon>
        <taxon>Chlamydiia</taxon>
        <taxon>Chlamydiales</taxon>
        <taxon>Chlamydiaceae</taxon>
        <taxon>Chlamydia/Chlamydophila group</taxon>
        <taxon>Chlamydia</taxon>
    </lineage>
</organism>
<reference key="1">
    <citation type="journal article" date="2003" name="Nucleic Acids Res.">
        <title>Genome sequence of Chlamydophila caviae (Chlamydia psittaci GPIC): examining the role of niche-specific genes in the evolution of the Chlamydiaceae.</title>
        <authorList>
            <person name="Read T.D."/>
            <person name="Myers G.S.A."/>
            <person name="Brunham R.C."/>
            <person name="Nelson W.C."/>
            <person name="Paulsen I.T."/>
            <person name="Heidelberg J.F."/>
            <person name="Holtzapple E.K."/>
            <person name="Khouri H.M."/>
            <person name="Federova N.B."/>
            <person name="Carty H.A."/>
            <person name="Umayam L.A."/>
            <person name="Haft D.H."/>
            <person name="Peterson J.D."/>
            <person name="Beanan M.J."/>
            <person name="White O."/>
            <person name="Salzberg S.L."/>
            <person name="Hsia R.-C."/>
            <person name="McClarty G."/>
            <person name="Rank R.G."/>
            <person name="Bavoil P.M."/>
            <person name="Fraser C.M."/>
        </authorList>
    </citation>
    <scope>NUCLEOTIDE SEQUENCE [LARGE SCALE GENOMIC DNA]</scope>
    <source>
        <strain>ATCC VR-813 / DSM 19441 / 03DC25 / GPIC</strain>
    </source>
</reference>
<protein>
    <recommendedName>
        <fullName evidence="1">Na(+)-translocating NADH-quinone reductase subunit B</fullName>
        <shortName evidence="1">Na(+)-NQR subunit B</shortName>
        <shortName evidence="1">Na(+)-translocating NQR subunit B</shortName>
        <ecNumber evidence="1">7.2.1.1</ecNumber>
    </recommendedName>
    <alternativeName>
        <fullName evidence="1">NQR complex subunit B</fullName>
    </alternativeName>
    <alternativeName>
        <fullName evidence="1">NQR-1 subunit B</fullName>
    </alternativeName>
</protein>